<sequence>MSVTVVLGAQWGDEGKGKLADILAHESQICCRAQGGNNAGHTIVANGVTYDFHILPSGLVNPGCINVIGSGCVVHVPSFFKELEALEKHGLKTDGRIFISDRAHVVFDVHQMVDGLEEVELAGGFIGTTGKGIGPTYSTKMTRSGLRMCDLFDEKIFEAKLRRIAMGYQKRFGDLLKYDVDDEIARYKDLRGKLAPYVVDQIPLLASAKEKNAKILVEGANALMLDIDYGTYPFVTSSNTGLGGVITGLNLGWRSLREVIGVVKAYTTRVGSGPFPTEQLNEIGEKMQSVGHEVGVTTGRKRRCGWLDLVVVKHSHACNDYTAINLTKLDILDDFDELKVATSYSYNGETLEGFPANPEILAQVEVQYDTLPGWKKPTTGVTNYYDLASQARSYIEYIEKFVGVKVKWIGVGPARDHMITRS</sequence>
<evidence type="ECO:0000250" key="1"/>
<evidence type="ECO:0000255" key="2">
    <source>
        <dbReference type="HAMAP-Rule" id="MF_03125"/>
    </source>
</evidence>
<proteinExistence type="inferred from homology"/>
<feature type="chain" id="PRO_0000399358" description="Adenylosuccinate synthetase">
    <location>
        <begin position="1"/>
        <end position="422"/>
    </location>
</feature>
<feature type="active site" description="Proton acceptor" evidence="2">
    <location>
        <position position="13"/>
    </location>
</feature>
<feature type="active site" description="Proton donor" evidence="2">
    <location>
        <position position="41"/>
    </location>
</feature>
<feature type="binding site" evidence="2">
    <location>
        <begin position="12"/>
        <end position="18"/>
    </location>
    <ligand>
        <name>GTP</name>
        <dbReference type="ChEBI" id="CHEBI:37565"/>
    </ligand>
</feature>
<feature type="binding site" description="in other chain" evidence="2">
    <location>
        <begin position="13"/>
        <end position="16"/>
    </location>
    <ligand>
        <name>IMP</name>
        <dbReference type="ChEBI" id="CHEBI:58053"/>
        <note>ligand shared between dimeric partners</note>
    </ligand>
</feature>
<feature type="binding site" evidence="2">
    <location>
        <position position="13"/>
    </location>
    <ligand>
        <name>Mg(2+)</name>
        <dbReference type="ChEBI" id="CHEBI:18420"/>
    </ligand>
</feature>
<feature type="binding site" description="in other chain" evidence="2">
    <location>
        <begin position="38"/>
        <end position="41"/>
    </location>
    <ligand>
        <name>IMP</name>
        <dbReference type="ChEBI" id="CHEBI:58053"/>
        <note>ligand shared between dimeric partners</note>
    </ligand>
</feature>
<feature type="binding site" evidence="2">
    <location>
        <begin position="40"/>
        <end position="42"/>
    </location>
    <ligand>
        <name>GTP</name>
        <dbReference type="ChEBI" id="CHEBI:37565"/>
    </ligand>
</feature>
<feature type="binding site" evidence="2">
    <location>
        <position position="40"/>
    </location>
    <ligand>
        <name>Mg(2+)</name>
        <dbReference type="ChEBI" id="CHEBI:18420"/>
    </ligand>
</feature>
<feature type="binding site" description="in other chain" evidence="2">
    <location>
        <position position="129"/>
    </location>
    <ligand>
        <name>IMP</name>
        <dbReference type="ChEBI" id="CHEBI:58053"/>
        <note>ligand shared between dimeric partners</note>
    </ligand>
</feature>
<feature type="binding site" evidence="2">
    <location>
        <position position="143"/>
    </location>
    <ligand>
        <name>IMP</name>
        <dbReference type="ChEBI" id="CHEBI:58053"/>
        <note>ligand shared between dimeric partners</note>
    </ligand>
</feature>
<feature type="binding site" description="in other chain" evidence="2">
    <location>
        <position position="221"/>
    </location>
    <ligand>
        <name>IMP</name>
        <dbReference type="ChEBI" id="CHEBI:58053"/>
        <note>ligand shared between dimeric partners</note>
    </ligand>
</feature>
<feature type="binding site" description="in other chain" evidence="2">
    <location>
        <position position="236"/>
    </location>
    <ligand>
        <name>IMP</name>
        <dbReference type="ChEBI" id="CHEBI:58053"/>
        <note>ligand shared between dimeric partners</note>
    </ligand>
</feature>
<feature type="binding site" evidence="2">
    <location>
        <begin position="296"/>
        <end position="302"/>
    </location>
    <ligand>
        <name>substrate</name>
    </ligand>
</feature>
<feature type="binding site" description="in other chain" evidence="2">
    <location>
        <position position="300"/>
    </location>
    <ligand>
        <name>IMP</name>
        <dbReference type="ChEBI" id="CHEBI:58053"/>
        <note>ligand shared between dimeric partners</note>
    </ligand>
</feature>
<feature type="binding site" evidence="2">
    <location>
        <position position="302"/>
    </location>
    <ligand>
        <name>GTP</name>
        <dbReference type="ChEBI" id="CHEBI:37565"/>
    </ligand>
</feature>
<feature type="binding site" evidence="2">
    <location>
        <begin position="328"/>
        <end position="330"/>
    </location>
    <ligand>
        <name>GTP</name>
        <dbReference type="ChEBI" id="CHEBI:37565"/>
    </ligand>
</feature>
<feature type="binding site" evidence="2">
    <location>
        <begin position="410"/>
        <end position="412"/>
    </location>
    <ligand>
        <name>GTP</name>
        <dbReference type="ChEBI" id="CHEBI:37565"/>
    </ligand>
</feature>
<dbReference type="EC" id="6.3.4.4" evidence="2"/>
<dbReference type="EMBL" id="DS231616">
    <property type="protein sequence ID" value="EDU45896.1"/>
    <property type="molecule type" value="Genomic_DNA"/>
</dbReference>
<dbReference type="RefSeq" id="XP_001933706.1">
    <property type="nucleotide sequence ID" value="XM_001933671.1"/>
</dbReference>
<dbReference type="SMR" id="B2VXY5"/>
<dbReference type="FunCoup" id="B2VXY5">
    <property type="interactions" value="786"/>
</dbReference>
<dbReference type="STRING" id="426418.B2VXY5"/>
<dbReference type="EnsemblFungi" id="EDU45896">
    <property type="protein sequence ID" value="EDU45896"/>
    <property type="gene ID" value="PTRG_03373"/>
</dbReference>
<dbReference type="GeneID" id="6341603"/>
<dbReference type="KEGG" id="ptrr:6341603"/>
<dbReference type="eggNOG" id="KOG1355">
    <property type="taxonomic scope" value="Eukaryota"/>
</dbReference>
<dbReference type="HOGENOM" id="CLU_029848_3_2_1"/>
<dbReference type="InParanoid" id="B2VXY5"/>
<dbReference type="OMA" id="FHHAKPI"/>
<dbReference type="OrthoDB" id="7771at28556"/>
<dbReference type="UniPathway" id="UPA00075">
    <property type="reaction ID" value="UER00335"/>
</dbReference>
<dbReference type="Proteomes" id="UP000001471">
    <property type="component" value="Unassembled WGS sequence"/>
</dbReference>
<dbReference type="GO" id="GO:0005737">
    <property type="term" value="C:cytoplasm"/>
    <property type="evidence" value="ECO:0007669"/>
    <property type="project" value="UniProtKB-SubCell"/>
</dbReference>
<dbReference type="GO" id="GO:0004019">
    <property type="term" value="F:adenylosuccinate synthase activity"/>
    <property type="evidence" value="ECO:0007669"/>
    <property type="project" value="UniProtKB-UniRule"/>
</dbReference>
<dbReference type="GO" id="GO:0016208">
    <property type="term" value="F:AMP binding"/>
    <property type="evidence" value="ECO:0007669"/>
    <property type="project" value="EnsemblFungi"/>
</dbReference>
<dbReference type="GO" id="GO:0019002">
    <property type="term" value="F:GMP binding"/>
    <property type="evidence" value="ECO:0007669"/>
    <property type="project" value="EnsemblFungi"/>
</dbReference>
<dbReference type="GO" id="GO:0005525">
    <property type="term" value="F:GTP binding"/>
    <property type="evidence" value="ECO:0007669"/>
    <property type="project" value="UniProtKB-UniRule"/>
</dbReference>
<dbReference type="GO" id="GO:0000287">
    <property type="term" value="F:magnesium ion binding"/>
    <property type="evidence" value="ECO:0007669"/>
    <property type="project" value="UniProtKB-UniRule"/>
</dbReference>
<dbReference type="GO" id="GO:0044208">
    <property type="term" value="P:'de novo' AMP biosynthetic process"/>
    <property type="evidence" value="ECO:0007669"/>
    <property type="project" value="UniProtKB-UniRule"/>
</dbReference>
<dbReference type="GO" id="GO:0071276">
    <property type="term" value="P:cellular response to cadmium ion"/>
    <property type="evidence" value="ECO:0007669"/>
    <property type="project" value="EnsemblFungi"/>
</dbReference>
<dbReference type="GO" id="GO:0046040">
    <property type="term" value="P:IMP metabolic process"/>
    <property type="evidence" value="ECO:0007669"/>
    <property type="project" value="TreeGrafter"/>
</dbReference>
<dbReference type="CDD" id="cd03108">
    <property type="entry name" value="AdSS"/>
    <property type="match status" value="1"/>
</dbReference>
<dbReference type="FunFam" id="3.90.170.10:FF:000001">
    <property type="entry name" value="Adenylosuccinate synthetase"/>
    <property type="match status" value="1"/>
</dbReference>
<dbReference type="FunFam" id="1.10.300.10:FF:000002">
    <property type="entry name" value="Adenylosuccinate synthetase, chloroplastic"/>
    <property type="match status" value="1"/>
</dbReference>
<dbReference type="Gene3D" id="3.40.440.10">
    <property type="entry name" value="Adenylosuccinate Synthetase, subunit A, domain 1"/>
    <property type="match status" value="1"/>
</dbReference>
<dbReference type="Gene3D" id="1.10.300.10">
    <property type="entry name" value="Adenylosuccinate Synthetase, subunit A, domain 2"/>
    <property type="match status" value="1"/>
</dbReference>
<dbReference type="Gene3D" id="3.90.170.10">
    <property type="entry name" value="Adenylosuccinate Synthetase, subunit A, domain 3"/>
    <property type="match status" value="1"/>
</dbReference>
<dbReference type="HAMAP" id="MF_00011">
    <property type="entry name" value="Adenylosucc_synth"/>
    <property type="match status" value="1"/>
</dbReference>
<dbReference type="InterPro" id="IPR018220">
    <property type="entry name" value="Adenylosuccin_syn_GTP-bd"/>
</dbReference>
<dbReference type="InterPro" id="IPR033128">
    <property type="entry name" value="Adenylosuccin_syn_Lys_AS"/>
</dbReference>
<dbReference type="InterPro" id="IPR042109">
    <property type="entry name" value="Adenylosuccinate_synth_dom1"/>
</dbReference>
<dbReference type="InterPro" id="IPR042110">
    <property type="entry name" value="Adenylosuccinate_synth_dom2"/>
</dbReference>
<dbReference type="InterPro" id="IPR042111">
    <property type="entry name" value="Adenylosuccinate_synth_dom3"/>
</dbReference>
<dbReference type="InterPro" id="IPR001114">
    <property type="entry name" value="Adenylosuccinate_synthetase"/>
</dbReference>
<dbReference type="InterPro" id="IPR027417">
    <property type="entry name" value="P-loop_NTPase"/>
</dbReference>
<dbReference type="NCBIfam" id="NF002223">
    <property type="entry name" value="PRK01117.1"/>
    <property type="match status" value="1"/>
</dbReference>
<dbReference type="NCBIfam" id="TIGR00184">
    <property type="entry name" value="purA"/>
    <property type="match status" value="1"/>
</dbReference>
<dbReference type="PANTHER" id="PTHR11846">
    <property type="entry name" value="ADENYLOSUCCINATE SYNTHETASE"/>
    <property type="match status" value="1"/>
</dbReference>
<dbReference type="PANTHER" id="PTHR11846:SF0">
    <property type="entry name" value="ADENYLOSUCCINATE SYNTHETASE"/>
    <property type="match status" value="1"/>
</dbReference>
<dbReference type="Pfam" id="PF00709">
    <property type="entry name" value="Adenylsucc_synt"/>
    <property type="match status" value="1"/>
</dbReference>
<dbReference type="SMART" id="SM00788">
    <property type="entry name" value="Adenylsucc_synt"/>
    <property type="match status" value="1"/>
</dbReference>
<dbReference type="SUPFAM" id="SSF52540">
    <property type="entry name" value="P-loop containing nucleoside triphosphate hydrolases"/>
    <property type="match status" value="1"/>
</dbReference>
<dbReference type="PROSITE" id="PS01266">
    <property type="entry name" value="ADENYLOSUCCIN_SYN_1"/>
    <property type="match status" value="1"/>
</dbReference>
<dbReference type="PROSITE" id="PS00513">
    <property type="entry name" value="ADENYLOSUCCIN_SYN_2"/>
    <property type="match status" value="1"/>
</dbReference>
<comment type="function">
    <text evidence="1">Plays an important role in the de novo pathway and in the salvage pathway of purine nucleotide biosynthesis. Catalyzes the first committed step in the biosynthesis of AMP from IMP (By similarity).</text>
</comment>
<comment type="catalytic activity">
    <reaction evidence="2">
        <text>IMP + L-aspartate + GTP = N(6)-(1,2-dicarboxyethyl)-AMP + GDP + phosphate + 2 H(+)</text>
        <dbReference type="Rhea" id="RHEA:15753"/>
        <dbReference type="ChEBI" id="CHEBI:15378"/>
        <dbReference type="ChEBI" id="CHEBI:29991"/>
        <dbReference type="ChEBI" id="CHEBI:37565"/>
        <dbReference type="ChEBI" id="CHEBI:43474"/>
        <dbReference type="ChEBI" id="CHEBI:57567"/>
        <dbReference type="ChEBI" id="CHEBI:58053"/>
        <dbReference type="ChEBI" id="CHEBI:58189"/>
        <dbReference type="EC" id="6.3.4.4"/>
    </reaction>
</comment>
<comment type="cofactor">
    <cofactor evidence="2">
        <name>Mg(2+)</name>
        <dbReference type="ChEBI" id="CHEBI:18420"/>
    </cofactor>
    <text evidence="2">Binds 1 Mg(2+) ion per subunit.</text>
</comment>
<comment type="pathway">
    <text evidence="2">Purine metabolism; AMP biosynthesis via de novo pathway; AMP from IMP: step 1/2.</text>
</comment>
<comment type="subunit">
    <text evidence="2">Homodimer.</text>
</comment>
<comment type="subcellular location">
    <subcellularLocation>
        <location evidence="2">Cytoplasm</location>
    </subcellularLocation>
</comment>
<comment type="similarity">
    <text evidence="2">Belongs to the adenylosuccinate synthetase family.</text>
</comment>
<protein>
    <recommendedName>
        <fullName evidence="2">Adenylosuccinate synthetase</fullName>
        <shortName evidence="2">AMPSase</shortName>
        <shortName evidence="2">AdSS</shortName>
        <ecNumber evidence="2">6.3.4.4</ecNumber>
    </recommendedName>
    <alternativeName>
        <fullName evidence="2">IMP--aspartate ligase</fullName>
    </alternativeName>
</protein>
<name>PURA_PYRTR</name>
<gene>
    <name type="ORF">PTRG_03373</name>
</gene>
<reference key="1">
    <citation type="journal article" date="2013" name="G3 (Bethesda)">
        <title>Comparative genomics of a plant-pathogenic fungus, Pyrenophora tritici-repentis, reveals transduplication and the impact of repeat elements on pathogenicity and population divergence.</title>
        <authorList>
            <person name="Manning V.A."/>
            <person name="Pandelova I."/>
            <person name="Dhillon B."/>
            <person name="Wilhelm L.J."/>
            <person name="Goodwin S.B."/>
            <person name="Berlin A.M."/>
            <person name="Figueroa M."/>
            <person name="Freitag M."/>
            <person name="Hane J.K."/>
            <person name="Henrissat B."/>
            <person name="Holman W.H."/>
            <person name="Kodira C.D."/>
            <person name="Martin J."/>
            <person name="Oliver R.P."/>
            <person name="Robbertse B."/>
            <person name="Schackwitz W."/>
            <person name="Schwartz D.C."/>
            <person name="Spatafora J.W."/>
            <person name="Turgeon B.G."/>
            <person name="Yandava C."/>
            <person name="Young S."/>
            <person name="Zhou S."/>
            <person name="Zeng Q."/>
            <person name="Grigoriev I.V."/>
            <person name="Ma L.-J."/>
            <person name="Ciuffetti L.M."/>
        </authorList>
    </citation>
    <scope>NUCLEOTIDE SEQUENCE [LARGE SCALE GENOMIC DNA]</scope>
    <source>
        <strain>Pt-1C-BFP</strain>
    </source>
</reference>
<keyword id="KW-0963">Cytoplasm</keyword>
<keyword id="KW-0342">GTP-binding</keyword>
<keyword id="KW-0436">Ligase</keyword>
<keyword id="KW-0460">Magnesium</keyword>
<keyword id="KW-0479">Metal-binding</keyword>
<keyword id="KW-0547">Nucleotide-binding</keyword>
<keyword id="KW-0658">Purine biosynthesis</keyword>
<keyword id="KW-1185">Reference proteome</keyword>
<organism>
    <name type="scientific">Pyrenophora tritici-repentis (strain Pt-1C-BFP)</name>
    <name type="common">Wheat tan spot fungus</name>
    <name type="synonym">Drechslera tritici-repentis</name>
    <dbReference type="NCBI Taxonomy" id="426418"/>
    <lineage>
        <taxon>Eukaryota</taxon>
        <taxon>Fungi</taxon>
        <taxon>Dikarya</taxon>
        <taxon>Ascomycota</taxon>
        <taxon>Pezizomycotina</taxon>
        <taxon>Dothideomycetes</taxon>
        <taxon>Pleosporomycetidae</taxon>
        <taxon>Pleosporales</taxon>
        <taxon>Pleosporineae</taxon>
        <taxon>Pleosporaceae</taxon>
        <taxon>Pyrenophora</taxon>
    </lineage>
</organism>
<accession>B2VXY5</accession>